<gene>
    <name type="ordered locus">CAALFM_C701270CA</name>
    <name type="ORF">CaJ7.0141</name>
    <name type="ORF">CaO19.6907</name>
</gene>
<feature type="chain" id="PRO_0000351102" description="DNA damage-binding protein CMR1">
    <location>
        <begin position="1"/>
        <end position="602"/>
    </location>
</feature>
<feature type="repeat" description="WD 1" evidence="2">
    <location>
        <begin position="229"/>
        <end position="270"/>
    </location>
</feature>
<feature type="repeat" description="WD 2" evidence="2">
    <location>
        <begin position="291"/>
        <end position="328"/>
    </location>
</feature>
<feature type="repeat" description="WD 3" evidence="2">
    <location>
        <begin position="390"/>
        <end position="430"/>
    </location>
</feature>
<feature type="repeat" description="WD 4" evidence="2">
    <location>
        <begin position="446"/>
        <end position="484"/>
    </location>
</feature>
<feature type="repeat" description="WD 5" evidence="2">
    <location>
        <begin position="526"/>
        <end position="569"/>
    </location>
</feature>
<feature type="repeat" description="WD 6" evidence="2">
    <location>
        <begin position="571"/>
        <end position="602"/>
    </location>
</feature>
<feature type="region of interest" description="Disordered" evidence="3">
    <location>
        <begin position="35"/>
        <end position="85"/>
    </location>
</feature>
<feature type="compositionally biased region" description="Basic residues" evidence="3">
    <location>
        <begin position="48"/>
        <end position="58"/>
    </location>
</feature>
<feature type="compositionally biased region" description="Basic and acidic residues" evidence="3">
    <location>
        <begin position="59"/>
        <end position="68"/>
    </location>
</feature>
<accession>Q59S45</accession>
<accession>A0A1D8PQT0</accession>
<accession>Q3MPL3</accession>
<keyword id="KW-0227">DNA damage</keyword>
<keyword id="KW-0238">DNA-binding</keyword>
<keyword id="KW-1185">Reference proteome</keyword>
<keyword id="KW-0677">Repeat</keyword>
<keyword id="KW-0853">WD repeat</keyword>
<proteinExistence type="inferred from homology"/>
<dbReference type="EMBL" id="AP006852">
    <property type="protein sequence ID" value="BAE44647.1"/>
    <property type="molecule type" value="Genomic_DNA"/>
</dbReference>
<dbReference type="EMBL" id="CP017629">
    <property type="protein sequence ID" value="AOW30495.1"/>
    <property type="molecule type" value="Genomic_DNA"/>
</dbReference>
<dbReference type="RefSeq" id="XP_712479.1">
    <property type="nucleotide sequence ID" value="XM_707386.1"/>
</dbReference>
<dbReference type="SMR" id="Q59S45"/>
<dbReference type="FunCoup" id="Q59S45">
    <property type="interactions" value="787"/>
</dbReference>
<dbReference type="STRING" id="237561.Q59S45"/>
<dbReference type="EnsemblFungi" id="C7_01270C_A-T">
    <property type="protein sequence ID" value="C7_01270C_A-T-p1"/>
    <property type="gene ID" value="C7_01270C_A"/>
</dbReference>
<dbReference type="GeneID" id="3645908"/>
<dbReference type="KEGG" id="cal:CAALFM_C701270CA"/>
<dbReference type="CGD" id="CAL0000176214">
    <property type="gene designation" value="orf19.6907"/>
</dbReference>
<dbReference type="VEuPathDB" id="FungiDB:C7_01270C_A"/>
<dbReference type="eggNOG" id="KOG4328">
    <property type="taxonomic scope" value="Eukaryota"/>
</dbReference>
<dbReference type="HOGENOM" id="CLU_017019_1_1_1"/>
<dbReference type="InParanoid" id="Q59S45"/>
<dbReference type="OMA" id="DPNTLYW"/>
<dbReference type="OrthoDB" id="9890280at2759"/>
<dbReference type="Proteomes" id="UP000000559">
    <property type="component" value="Chromosome 7"/>
</dbReference>
<dbReference type="GO" id="GO:0000785">
    <property type="term" value="C:chromatin"/>
    <property type="evidence" value="ECO:0007669"/>
    <property type="project" value="EnsemblFungi"/>
</dbReference>
<dbReference type="GO" id="GO:0005737">
    <property type="term" value="C:cytoplasm"/>
    <property type="evidence" value="ECO:0007669"/>
    <property type="project" value="EnsemblFungi"/>
</dbReference>
<dbReference type="GO" id="GO:0034399">
    <property type="term" value="C:nuclear periphery"/>
    <property type="evidence" value="ECO:0007669"/>
    <property type="project" value="EnsemblFungi"/>
</dbReference>
<dbReference type="GO" id="GO:0005634">
    <property type="term" value="C:nucleus"/>
    <property type="evidence" value="ECO:0000318"/>
    <property type="project" value="GO_Central"/>
</dbReference>
<dbReference type="GO" id="GO:0003677">
    <property type="term" value="F:DNA binding"/>
    <property type="evidence" value="ECO:0000318"/>
    <property type="project" value="GO_Central"/>
</dbReference>
<dbReference type="GO" id="GO:0006974">
    <property type="term" value="P:DNA damage response"/>
    <property type="evidence" value="ECO:0007669"/>
    <property type="project" value="UniProtKB-KW"/>
</dbReference>
<dbReference type="GO" id="GO:2000001">
    <property type="term" value="P:regulation of DNA damage checkpoint"/>
    <property type="evidence" value="ECO:0000318"/>
    <property type="project" value="GO_Central"/>
</dbReference>
<dbReference type="Gene3D" id="2.130.10.10">
    <property type="entry name" value="YVTN repeat-like/Quinoprotein amine dehydrogenase"/>
    <property type="match status" value="1"/>
</dbReference>
<dbReference type="InterPro" id="IPR015943">
    <property type="entry name" value="WD40/YVTN_repeat-like_dom_sf"/>
</dbReference>
<dbReference type="InterPro" id="IPR019775">
    <property type="entry name" value="WD40_repeat_CS"/>
</dbReference>
<dbReference type="InterPro" id="IPR036322">
    <property type="entry name" value="WD40_repeat_dom_sf"/>
</dbReference>
<dbReference type="InterPro" id="IPR001680">
    <property type="entry name" value="WD40_rpt"/>
</dbReference>
<dbReference type="InterPro" id="IPR050853">
    <property type="entry name" value="WD_repeat_DNA-damage-binding"/>
</dbReference>
<dbReference type="PANTHER" id="PTHR14773">
    <property type="entry name" value="WD REPEAT-CONTAINING PROTEIN 76"/>
    <property type="match status" value="1"/>
</dbReference>
<dbReference type="PANTHER" id="PTHR14773:SF0">
    <property type="entry name" value="WD REPEAT-CONTAINING PROTEIN 76"/>
    <property type="match status" value="1"/>
</dbReference>
<dbReference type="Pfam" id="PF00400">
    <property type="entry name" value="WD40"/>
    <property type="match status" value="1"/>
</dbReference>
<dbReference type="SMART" id="SM00320">
    <property type="entry name" value="WD40"/>
    <property type="match status" value="5"/>
</dbReference>
<dbReference type="SUPFAM" id="SSF50978">
    <property type="entry name" value="WD40 repeat-like"/>
    <property type="match status" value="1"/>
</dbReference>
<dbReference type="PROSITE" id="PS00678">
    <property type="entry name" value="WD_REPEATS_1"/>
    <property type="match status" value="1"/>
</dbReference>
<dbReference type="PROSITE" id="PS50082">
    <property type="entry name" value="WD_REPEATS_2"/>
    <property type="match status" value="1"/>
</dbReference>
<dbReference type="PROSITE" id="PS50294">
    <property type="entry name" value="WD_REPEATS_REGION"/>
    <property type="match status" value="1"/>
</dbReference>
<sequence length="602" mass="69057">MALSELEKKRQENIRRNQELLKKLDLDSISDSIKKEVDNKSFSSPSSQKRRKTTKKPVIKKEISEPSRRSRRIAGIKSELEDPKQAARIREEEELKQHRKQELERLKRTRLFGDFKLIDLITNKKGDMIFEKNVMDRKLSHIGLDSKVEEKKNEEDKEDEEEAINIDENNRVLQLVQSLGDKFSAGDFYEEIRNSQTNGNSKDKSLDAKRKEFDNLNIYPRFDPLDIKICHNRITSMFFHPSTTNRIVVGGDTTGNVGIWLVDEQNNDTKEEEEDDDDDEPSISILQLHGRNVSKIMTPTFSPEKIYTSSYDGSIRVLDLNKLTSTELLYLNEPGAREDIALGVSDINQCQDSSVIFMTTLDGEFYQHDTRTPFNTRQRHHLATKDLLRLHDKKIGGFAVNPNTNYQIATASLDRTLRIWDLRNVNKSVYSEFENQKSPHMYGNYNSRLSVSCVDWNQENRLVCNGYDDNICLFDYSGGSKLDNELPVITEWKSDFVPSTKSSEESELLPNNLTPFTKIKHNCQTGRWVSILKSHWQTNPADGVQKFIIANMNRGLDIYNQDGQILAHLNEQVGAVPAVCTLHPSQNWAVGGSASGKVYLFE</sequence>
<organism>
    <name type="scientific">Candida albicans (strain SC5314 / ATCC MYA-2876)</name>
    <name type="common">Yeast</name>
    <dbReference type="NCBI Taxonomy" id="237561"/>
    <lineage>
        <taxon>Eukaryota</taxon>
        <taxon>Fungi</taxon>
        <taxon>Dikarya</taxon>
        <taxon>Ascomycota</taxon>
        <taxon>Saccharomycotina</taxon>
        <taxon>Pichiomycetes</taxon>
        <taxon>Debaryomycetaceae</taxon>
        <taxon>Candida/Lodderomyces clade</taxon>
        <taxon>Candida</taxon>
    </lineage>
</organism>
<protein>
    <recommendedName>
        <fullName evidence="1">DNA damage-binding protein CMR1</fullName>
    </recommendedName>
</protein>
<reference key="1">
    <citation type="journal article" date="2005" name="Genetics">
        <title>Sequence finishing and gene mapping for Candida albicans chromosome 7 and syntenic analysis against the Saccharomyces cerevisiae genome.</title>
        <authorList>
            <person name="Chibana H."/>
            <person name="Oka N."/>
            <person name="Nakayama H."/>
            <person name="Aoyama T."/>
            <person name="Magee B.B."/>
            <person name="Magee P.T."/>
            <person name="Mikami Y."/>
        </authorList>
    </citation>
    <scope>NUCLEOTIDE SEQUENCE [LARGE SCALE GENOMIC DNA]</scope>
    <source>
        <strain>SC5314 / ATCC MYA-2876</strain>
    </source>
</reference>
<reference key="2">
    <citation type="journal article" date="2004" name="Proc. Natl. Acad. Sci. U.S.A.">
        <title>The diploid genome sequence of Candida albicans.</title>
        <authorList>
            <person name="Jones T."/>
            <person name="Federspiel N.A."/>
            <person name="Chibana H."/>
            <person name="Dungan J."/>
            <person name="Kalman S."/>
            <person name="Magee B.B."/>
            <person name="Newport G."/>
            <person name="Thorstenson Y.R."/>
            <person name="Agabian N."/>
            <person name="Magee P.T."/>
            <person name="Davis R.W."/>
            <person name="Scherer S."/>
        </authorList>
    </citation>
    <scope>NUCLEOTIDE SEQUENCE [LARGE SCALE GENOMIC DNA]</scope>
    <source>
        <strain>SC5314 / ATCC MYA-2876</strain>
    </source>
</reference>
<reference key="3">
    <citation type="journal article" date="2007" name="Genome Biol.">
        <title>Assembly of the Candida albicans genome into sixteen supercontigs aligned on the eight chromosomes.</title>
        <authorList>
            <person name="van het Hoog M."/>
            <person name="Rast T.J."/>
            <person name="Martchenko M."/>
            <person name="Grindle S."/>
            <person name="Dignard D."/>
            <person name="Hogues H."/>
            <person name="Cuomo C."/>
            <person name="Berriman M."/>
            <person name="Scherer S."/>
            <person name="Magee B.B."/>
            <person name="Whiteway M."/>
            <person name="Chibana H."/>
            <person name="Nantel A."/>
            <person name="Magee P.T."/>
        </authorList>
    </citation>
    <scope>GENOME REANNOTATION</scope>
    <source>
        <strain>SC5314 / ATCC MYA-2876</strain>
    </source>
</reference>
<reference key="4">
    <citation type="journal article" date="2013" name="Genome Biol.">
        <title>Assembly of a phased diploid Candida albicans genome facilitates allele-specific measurements and provides a simple model for repeat and indel structure.</title>
        <authorList>
            <person name="Muzzey D."/>
            <person name="Schwartz K."/>
            <person name="Weissman J.S."/>
            <person name="Sherlock G."/>
        </authorList>
    </citation>
    <scope>NUCLEOTIDE SEQUENCE [LARGE SCALE GENOMIC DNA]</scope>
    <scope>GENOME REANNOTATION</scope>
    <source>
        <strain>SC5314 / ATCC MYA-2876</strain>
    </source>
</reference>
<comment type="function">
    <text evidence="1">DNA-binding protein that binds to both single- and double-stranded DNA. Binds preferentially to UV-damaged DNA. May be involved in DNA-metabolic processes.</text>
</comment>
<comment type="similarity">
    <text evidence="4">Belongs to the WD repeat DDB2/WDR76 family.</text>
</comment>
<evidence type="ECO:0000250" key="1">
    <source>
        <dbReference type="UniProtKB" id="Q12510"/>
    </source>
</evidence>
<evidence type="ECO:0000255" key="2"/>
<evidence type="ECO:0000256" key="3">
    <source>
        <dbReference type="SAM" id="MobiDB-lite"/>
    </source>
</evidence>
<evidence type="ECO:0000305" key="4"/>
<name>CMR1_CANAL</name>